<keyword id="KW-0963">Cytoplasm</keyword>
<keyword id="KW-0448">Lipopolysaccharide biosynthesis</keyword>
<keyword id="KW-0548">Nucleotidyltransferase</keyword>
<keyword id="KW-0808">Transferase</keyword>
<name>KDSB_PSYWF</name>
<feature type="chain" id="PRO_0000370124" description="3-deoxy-manno-octulosonate cytidylyltransferase">
    <location>
        <begin position="1"/>
        <end position="275"/>
    </location>
</feature>
<sequence length="275" mass="30646">MTLVSDLALPKPKVHIVIPARFKSTRLPGKPLLEIHGKPMILWVAQKASQATFADDLCIATDDERIAAVCQQAGYEVVMTDAHHASGTDRLSEVAQKKGWDAEDIVVNMQGDEPLVPPQLLEQVKDLLVNKPDCVMATLYELILDYQEFIRPSVVKVVTDNLKHALYFSRAPIPCDRDHAMAMVQQPEGSHQPPLTVPKQAYRHLGIYAYRVKLLQDFVRWSPGILENLESLEQLRVLENGGKIAIEAASVQLPPGVDLQEDLDRLNALPISELQ</sequence>
<accession>A5WF97</accession>
<evidence type="ECO:0000255" key="1">
    <source>
        <dbReference type="HAMAP-Rule" id="MF_00057"/>
    </source>
</evidence>
<organism>
    <name type="scientific">Psychrobacter sp. (strain PRwf-1)</name>
    <dbReference type="NCBI Taxonomy" id="349106"/>
    <lineage>
        <taxon>Bacteria</taxon>
        <taxon>Pseudomonadati</taxon>
        <taxon>Pseudomonadota</taxon>
        <taxon>Gammaproteobacteria</taxon>
        <taxon>Moraxellales</taxon>
        <taxon>Moraxellaceae</taxon>
        <taxon>Psychrobacter</taxon>
    </lineage>
</organism>
<comment type="function">
    <text evidence="1">Activates KDO (a required 8-carbon sugar) for incorporation into bacterial lipopolysaccharide in Gram-negative bacteria.</text>
</comment>
<comment type="catalytic activity">
    <reaction evidence="1">
        <text>3-deoxy-alpha-D-manno-oct-2-ulosonate + CTP = CMP-3-deoxy-beta-D-manno-octulosonate + diphosphate</text>
        <dbReference type="Rhea" id="RHEA:23448"/>
        <dbReference type="ChEBI" id="CHEBI:33019"/>
        <dbReference type="ChEBI" id="CHEBI:37563"/>
        <dbReference type="ChEBI" id="CHEBI:85986"/>
        <dbReference type="ChEBI" id="CHEBI:85987"/>
        <dbReference type="EC" id="2.7.7.38"/>
    </reaction>
</comment>
<comment type="pathway">
    <text evidence="1">Nucleotide-sugar biosynthesis; CMP-3-deoxy-D-manno-octulosonate biosynthesis; CMP-3-deoxy-D-manno-octulosonate from 3-deoxy-D-manno-octulosonate and CTP: step 1/1.</text>
</comment>
<comment type="pathway">
    <text evidence="1">Bacterial outer membrane biogenesis; lipopolysaccharide biosynthesis.</text>
</comment>
<comment type="subcellular location">
    <subcellularLocation>
        <location evidence="1">Cytoplasm</location>
    </subcellularLocation>
</comment>
<comment type="similarity">
    <text evidence="1">Belongs to the KdsB family.</text>
</comment>
<dbReference type="EC" id="2.7.7.38" evidence="1"/>
<dbReference type="EMBL" id="CP000713">
    <property type="protein sequence ID" value="ABQ94338.1"/>
    <property type="molecule type" value="Genomic_DNA"/>
</dbReference>
<dbReference type="SMR" id="A5WF97"/>
<dbReference type="STRING" id="349106.PsycPRwf_1393"/>
<dbReference type="KEGG" id="prw:PsycPRwf_1393"/>
<dbReference type="eggNOG" id="COG1212">
    <property type="taxonomic scope" value="Bacteria"/>
</dbReference>
<dbReference type="HOGENOM" id="CLU_065038_1_0_6"/>
<dbReference type="UniPathway" id="UPA00030"/>
<dbReference type="UniPathway" id="UPA00358">
    <property type="reaction ID" value="UER00476"/>
</dbReference>
<dbReference type="GO" id="GO:0005829">
    <property type="term" value="C:cytosol"/>
    <property type="evidence" value="ECO:0007669"/>
    <property type="project" value="TreeGrafter"/>
</dbReference>
<dbReference type="GO" id="GO:0008690">
    <property type="term" value="F:3-deoxy-manno-octulosonate cytidylyltransferase activity"/>
    <property type="evidence" value="ECO:0007669"/>
    <property type="project" value="UniProtKB-UniRule"/>
</dbReference>
<dbReference type="GO" id="GO:0033468">
    <property type="term" value="P:CMP-keto-3-deoxy-D-manno-octulosonic acid biosynthetic process"/>
    <property type="evidence" value="ECO:0007669"/>
    <property type="project" value="UniProtKB-UniRule"/>
</dbReference>
<dbReference type="GO" id="GO:0009103">
    <property type="term" value="P:lipopolysaccharide biosynthetic process"/>
    <property type="evidence" value="ECO:0007669"/>
    <property type="project" value="UniProtKB-UniRule"/>
</dbReference>
<dbReference type="CDD" id="cd02517">
    <property type="entry name" value="CMP-KDO-Synthetase"/>
    <property type="match status" value="1"/>
</dbReference>
<dbReference type="FunFam" id="3.90.550.10:FF:000011">
    <property type="entry name" value="3-deoxy-manno-octulosonate cytidylyltransferase"/>
    <property type="match status" value="1"/>
</dbReference>
<dbReference type="Gene3D" id="3.90.550.10">
    <property type="entry name" value="Spore Coat Polysaccharide Biosynthesis Protein SpsA, Chain A"/>
    <property type="match status" value="1"/>
</dbReference>
<dbReference type="HAMAP" id="MF_00057">
    <property type="entry name" value="KdsB"/>
    <property type="match status" value="1"/>
</dbReference>
<dbReference type="InterPro" id="IPR003329">
    <property type="entry name" value="Cytidylyl_trans"/>
</dbReference>
<dbReference type="InterPro" id="IPR004528">
    <property type="entry name" value="KdsB"/>
</dbReference>
<dbReference type="InterPro" id="IPR029044">
    <property type="entry name" value="Nucleotide-diphossugar_trans"/>
</dbReference>
<dbReference type="NCBIfam" id="TIGR00466">
    <property type="entry name" value="kdsB"/>
    <property type="match status" value="1"/>
</dbReference>
<dbReference type="NCBIfam" id="NF003950">
    <property type="entry name" value="PRK05450.1-3"/>
    <property type="match status" value="1"/>
</dbReference>
<dbReference type="NCBIfam" id="NF003952">
    <property type="entry name" value="PRK05450.1-5"/>
    <property type="match status" value="1"/>
</dbReference>
<dbReference type="NCBIfam" id="NF009905">
    <property type="entry name" value="PRK13368.1"/>
    <property type="match status" value="1"/>
</dbReference>
<dbReference type="PANTHER" id="PTHR42866">
    <property type="entry name" value="3-DEOXY-MANNO-OCTULOSONATE CYTIDYLYLTRANSFERASE"/>
    <property type="match status" value="1"/>
</dbReference>
<dbReference type="PANTHER" id="PTHR42866:SF2">
    <property type="entry name" value="3-DEOXY-MANNO-OCTULOSONATE CYTIDYLYLTRANSFERASE, MITOCHONDRIAL"/>
    <property type="match status" value="1"/>
</dbReference>
<dbReference type="Pfam" id="PF02348">
    <property type="entry name" value="CTP_transf_3"/>
    <property type="match status" value="1"/>
</dbReference>
<dbReference type="SUPFAM" id="SSF53448">
    <property type="entry name" value="Nucleotide-diphospho-sugar transferases"/>
    <property type="match status" value="1"/>
</dbReference>
<proteinExistence type="inferred from homology"/>
<gene>
    <name evidence="1" type="primary">kdsB</name>
    <name type="ordered locus">PsycPRwf_1393</name>
</gene>
<protein>
    <recommendedName>
        <fullName evidence="1">3-deoxy-manno-octulosonate cytidylyltransferase</fullName>
        <ecNumber evidence="1">2.7.7.38</ecNumber>
    </recommendedName>
    <alternativeName>
        <fullName evidence="1">CMP-2-keto-3-deoxyoctulosonic acid synthase</fullName>
        <shortName evidence="1">CKS</shortName>
        <shortName evidence="1">CMP-KDO synthase</shortName>
    </alternativeName>
</protein>
<reference key="1">
    <citation type="submission" date="2007-05" db="EMBL/GenBank/DDBJ databases">
        <title>Complete sequence of chromosome of Psychrobacter sp. PRwf-1.</title>
        <authorList>
            <consortium name="US DOE Joint Genome Institute"/>
            <person name="Copeland A."/>
            <person name="Lucas S."/>
            <person name="Lapidus A."/>
            <person name="Barry K."/>
            <person name="Detter J.C."/>
            <person name="Glavina del Rio T."/>
            <person name="Hammon N."/>
            <person name="Israni S."/>
            <person name="Dalin E."/>
            <person name="Tice H."/>
            <person name="Pitluck S."/>
            <person name="Chain P."/>
            <person name="Malfatti S."/>
            <person name="Shin M."/>
            <person name="Vergez L."/>
            <person name="Schmutz J."/>
            <person name="Larimer F."/>
            <person name="Land M."/>
            <person name="Hauser L."/>
            <person name="Kyrpides N."/>
            <person name="Kim E."/>
            <person name="Tiedje J."/>
            <person name="Richardson P."/>
        </authorList>
    </citation>
    <scope>NUCLEOTIDE SEQUENCE [LARGE SCALE GENOMIC DNA]</scope>
    <source>
        <strain>PRwf-1</strain>
    </source>
</reference>